<reference key="1">
    <citation type="journal article" date="2009" name="PLoS ONE">
        <title>Non mycobacterial virulence genes in the genome of the emerging pathogen Mycobacterium abscessus.</title>
        <authorList>
            <person name="Ripoll F."/>
            <person name="Pasek S."/>
            <person name="Schenowitz C."/>
            <person name="Dossat C."/>
            <person name="Barbe V."/>
            <person name="Rottman M."/>
            <person name="Macheras E."/>
            <person name="Heym B."/>
            <person name="Herrmann J.L."/>
            <person name="Daffe M."/>
            <person name="Brosch R."/>
            <person name="Risler J.L."/>
            <person name="Gaillard J.L."/>
        </authorList>
    </citation>
    <scope>NUCLEOTIDE SEQUENCE [LARGE SCALE GENOMIC DNA]</scope>
    <source>
        <strain>ATCC 19977 / DSM 44196 / CCUG 20993 / CIP 104536 / JCM 13569 / NCTC 13031 / TMC 1543 / L948</strain>
    </source>
</reference>
<accession>B1ML09</accession>
<comment type="function">
    <text evidence="1">Exhibits S-adenosyl-L-methionine-dependent methyltransferase activity.</text>
</comment>
<comment type="similarity">
    <text evidence="2">Belongs to the UPF0677 family.</text>
</comment>
<dbReference type="EC" id="2.1.1.-"/>
<dbReference type="EMBL" id="CU458896">
    <property type="protein sequence ID" value="CAM64654.1"/>
    <property type="molecule type" value="Genomic_DNA"/>
</dbReference>
<dbReference type="RefSeq" id="WP_005079765.1">
    <property type="nucleotide sequence ID" value="NZ_MLCG01000001.1"/>
</dbReference>
<dbReference type="SMR" id="B1ML09"/>
<dbReference type="GeneID" id="93381529"/>
<dbReference type="KEGG" id="mab:MAB_4585c"/>
<dbReference type="Proteomes" id="UP000007137">
    <property type="component" value="Chromosome"/>
</dbReference>
<dbReference type="GO" id="GO:0008168">
    <property type="term" value="F:methyltransferase activity"/>
    <property type="evidence" value="ECO:0007669"/>
    <property type="project" value="UniProtKB-KW"/>
</dbReference>
<dbReference type="GO" id="GO:0032259">
    <property type="term" value="P:methylation"/>
    <property type="evidence" value="ECO:0007669"/>
    <property type="project" value="UniProtKB-KW"/>
</dbReference>
<dbReference type="Gene3D" id="3.40.50.150">
    <property type="entry name" value="Vaccinia Virus protein VP39"/>
    <property type="match status" value="1"/>
</dbReference>
<dbReference type="InterPro" id="IPR007213">
    <property type="entry name" value="Ppm1/Ppm2/Tcmp"/>
</dbReference>
<dbReference type="InterPro" id="IPR029063">
    <property type="entry name" value="SAM-dependent_MTases_sf"/>
</dbReference>
<dbReference type="InterPro" id="IPR011610">
    <property type="entry name" value="SAM_mthyl_Trfase_ML2640-like"/>
</dbReference>
<dbReference type="NCBIfam" id="TIGR00027">
    <property type="entry name" value="mthyl_TIGR00027"/>
    <property type="match status" value="1"/>
</dbReference>
<dbReference type="PANTHER" id="PTHR43619">
    <property type="entry name" value="S-ADENOSYL-L-METHIONINE-DEPENDENT METHYLTRANSFERASE YKTD-RELATED"/>
    <property type="match status" value="1"/>
</dbReference>
<dbReference type="PANTHER" id="PTHR43619:SF2">
    <property type="entry name" value="S-ADENOSYL-L-METHIONINE-DEPENDENT METHYLTRANSFERASES SUPERFAMILY PROTEIN"/>
    <property type="match status" value="1"/>
</dbReference>
<dbReference type="Pfam" id="PF04072">
    <property type="entry name" value="LCM"/>
    <property type="match status" value="1"/>
</dbReference>
<dbReference type="SUPFAM" id="SSF53335">
    <property type="entry name" value="S-adenosyl-L-methionine-dependent methyltransferases"/>
    <property type="match status" value="1"/>
</dbReference>
<proteinExistence type="inferred from homology"/>
<evidence type="ECO:0000250" key="1"/>
<evidence type="ECO:0000305" key="2"/>
<gene>
    <name type="ordered locus">MAB_4585c</name>
</gene>
<organism>
    <name type="scientific">Mycobacteroides abscessus (strain ATCC 19977 / DSM 44196 / CCUG 20993 / CIP 104536 / JCM 13569 / NCTC 13031 / TMC 1543 / L948)</name>
    <name type="common">Mycobacterium abscessus</name>
    <dbReference type="NCBI Taxonomy" id="561007"/>
    <lineage>
        <taxon>Bacteria</taxon>
        <taxon>Bacillati</taxon>
        <taxon>Actinomycetota</taxon>
        <taxon>Actinomycetes</taxon>
        <taxon>Mycobacteriales</taxon>
        <taxon>Mycobacteriaceae</taxon>
        <taxon>Mycobacteroides</taxon>
        <taxon>Mycobacteroides abscessus</taxon>
    </lineage>
</organism>
<feature type="chain" id="PRO_0000361125" description="Putative S-adenosyl-L-methionine-dependent methyltransferase MAB_4585c">
    <location>
        <begin position="1"/>
        <end position="308"/>
    </location>
</feature>
<feature type="binding site" evidence="1">
    <location>
        <position position="131"/>
    </location>
    <ligand>
        <name>S-adenosyl-L-methionine</name>
        <dbReference type="ChEBI" id="CHEBI:59789"/>
    </ligand>
</feature>
<feature type="binding site" evidence="1">
    <location>
        <begin position="160"/>
        <end position="161"/>
    </location>
    <ligand>
        <name>S-adenosyl-L-methionine</name>
        <dbReference type="ChEBI" id="CHEBI:59789"/>
    </ligand>
</feature>
<sequence>MTSTDQGSWARSEGDSWDIVSSVGYTALGVSAQRAVESERPDALIDDPFAKHFVLAAGEPHLIETITKRDAPQASPFEYLRGMGMRSRFFDEFFLEAAASGITQAVILAAGLDARAHRLAWPAGVTVYELDQPQVLAFKDGVYAQQGAEPTCDRRTVAVDLRDDWPAALKEAGFDAGRPTAWSAEGLLPYLPAAAQELLFERMVELSAPGSRAAIEGPTGTLGMSQFAKVEQKYRSEKDTFGKIDITELFYDEEKTPPVEWFSVRGWSTQGLDMFDLAERYGVRHPEVPEDIRELAGAMHYLTCTLPA</sequence>
<keyword id="KW-0489">Methyltransferase</keyword>
<keyword id="KW-1185">Reference proteome</keyword>
<keyword id="KW-0949">S-adenosyl-L-methionine</keyword>
<keyword id="KW-0808">Transferase</keyword>
<protein>
    <recommendedName>
        <fullName>Putative S-adenosyl-L-methionine-dependent methyltransferase MAB_4585c</fullName>
        <ecNumber>2.1.1.-</ecNumber>
    </recommendedName>
</protein>
<name>Y4585_MYCA9</name>